<sequence length="304" mass="32387">MDYNRMNSFLEYPLCNRGPSAYSAHSAHSAPTSFPPSSTQAVDSYASEGRYGGGLSSPAFQQNSGYPAQQPPSALGVPFPSSAPSGYAPAACSPSYGPSQYYPLGQSEGDGGYFHPTSYGAQLGGLSDGYGAGGAGPGPYPPQHPPYGNEQTASFAPAYADLLSEDKEAPCPSEPNTPTARTFDWMKVKRNPPKTGKVSEPGLGSPSGLRTNFTTRQLTELEKEFHFNKYLSRARRVEIAATLELNETQVKIWFQNRRMKQKKREREGGRVPPAPPGCPKEAAGDASDQSTCTSPEASPSSVTS</sequence>
<accession>A2T6H5</accession>
<organism>
    <name type="scientific">Macaca nemestrina</name>
    <name type="common">Pig-tailed macaque</name>
    <dbReference type="NCBI Taxonomy" id="9545"/>
    <lineage>
        <taxon>Eukaryota</taxon>
        <taxon>Metazoa</taxon>
        <taxon>Chordata</taxon>
        <taxon>Craniata</taxon>
        <taxon>Vertebrata</taxon>
        <taxon>Euteleostomi</taxon>
        <taxon>Mammalia</taxon>
        <taxon>Eutheria</taxon>
        <taxon>Euarchontoglires</taxon>
        <taxon>Primates</taxon>
        <taxon>Haplorrhini</taxon>
        <taxon>Catarrhini</taxon>
        <taxon>Cercopithecidae</taxon>
        <taxon>Cercopithecinae</taxon>
        <taxon>Macaca</taxon>
    </lineage>
</organism>
<evidence type="ECO:0000250" key="1"/>
<evidence type="ECO:0000255" key="2">
    <source>
        <dbReference type="PROSITE-ProRule" id="PRU00108"/>
    </source>
</evidence>
<evidence type="ECO:0000256" key="3">
    <source>
        <dbReference type="SAM" id="MobiDB-lite"/>
    </source>
</evidence>
<evidence type="ECO:0000305" key="4"/>
<proteinExistence type="inferred from homology"/>
<reference key="1">
    <citation type="submission" date="2006-08" db="EMBL/GenBank/DDBJ databases">
        <title>Positive selection in transcription factor genes on the human lineage.</title>
        <authorList>
            <person name="Nickel G.C."/>
            <person name="Tefft D.L."/>
            <person name="Trevarthen K."/>
            <person name="Funt J."/>
            <person name="Adams M.D."/>
        </authorList>
    </citation>
    <scope>NUCLEOTIDE SEQUENCE [GENOMIC DNA]</scope>
</reference>
<name>HXB1_MACNE</name>
<keyword id="KW-0217">Developmental protein</keyword>
<keyword id="KW-0238">DNA-binding</keyword>
<keyword id="KW-0371">Homeobox</keyword>
<keyword id="KW-0539">Nucleus</keyword>
<keyword id="KW-1185">Reference proteome</keyword>
<keyword id="KW-0804">Transcription</keyword>
<keyword id="KW-0805">Transcription regulation</keyword>
<comment type="function">
    <text evidence="1">Sequence-specific transcription factor which is part of a developmental regulatory system that provides cells with specific positional identities on the anterior-posterior axis. Acts on the anterior body structures (By similarity).</text>
</comment>
<comment type="subcellular location">
    <subcellularLocation>
        <location evidence="2">Nucleus</location>
    </subcellularLocation>
</comment>
<comment type="similarity">
    <text evidence="4">Belongs to the Antp homeobox family. Labial subfamily.</text>
</comment>
<gene>
    <name type="primary">HOXB1</name>
</gene>
<feature type="chain" id="PRO_0000285424" description="Homeobox protein Hox-B1">
    <location>
        <begin position="1"/>
        <end position="304"/>
    </location>
</feature>
<feature type="DNA-binding region" description="Homeobox" evidence="2">
    <location>
        <begin position="206"/>
        <end position="265"/>
    </location>
</feature>
<feature type="region of interest" description="Disordered" evidence="3">
    <location>
        <begin position="25"/>
        <end position="80"/>
    </location>
</feature>
<feature type="region of interest" description="Disordered" evidence="3">
    <location>
        <begin position="130"/>
        <end position="151"/>
    </location>
</feature>
<feature type="region of interest" description="Disordered" evidence="3">
    <location>
        <begin position="187"/>
        <end position="211"/>
    </location>
</feature>
<feature type="region of interest" description="Disordered" evidence="3">
    <location>
        <begin position="257"/>
        <end position="304"/>
    </location>
</feature>
<feature type="short sequence motif" description="Antp-type hexapeptide">
    <location>
        <begin position="182"/>
        <end position="187"/>
    </location>
</feature>
<feature type="compositionally biased region" description="Low complexity" evidence="3">
    <location>
        <begin position="25"/>
        <end position="39"/>
    </location>
</feature>
<feature type="compositionally biased region" description="Polar residues" evidence="3">
    <location>
        <begin position="58"/>
        <end position="67"/>
    </location>
</feature>
<feature type="compositionally biased region" description="Polar residues" evidence="3">
    <location>
        <begin position="287"/>
        <end position="304"/>
    </location>
</feature>
<protein>
    <recommendedName>
        <fullName>Homeobox protein Hox-B1</fullName>
    </recommendedName>
</protein>
<dbReference type="EMBL" id="DQ977080">
    <property type="protein sequence ID" value="ABM88023.1"/>
    <property type="molecule type" value="Genomic_DNA"/>
</dbReference>
<dbReference type="SMR" id="A2T6H5"/>
<dbReference type="STRING" id="9545.ENSMNEP00000026838"/>
<dbReference type="Ensembl" id="ENSMNET00000051125.1">
    <property type="protein sequence ID" value="ENSMNEP00000026838.1"/>
    <property type="gene ID" value="ENSMNEG00000036848.1"/>
</dbReference>
<dbReference type="GeneID" id="105472312"/>
<dbReference type="KEGG" id="mni:105472312"/>
<dbReference type="GeneTree" id="ENSGT00940000159503"/>
<dbReference type="OMA" id="ACNPSYG"/>
<dbReference type="OrthoDB" id="14320at314294"/>
<dbReference type="Proteomes" id="UP000233120">
    <property type="component" value="Unassembled WGS sequence"/>
</dbReference>
<dbReference type="Bgee" id="ENSMNEG00000036848">
    <property type="expression patterns" value="Expressed in lung"/>
</dbReference>
<dbReference type="GO" id="GO:0005654">
    <property type="term" value="C:nucleoplasm"/>
    <property type="evidence" value="ECO:0007669"/>
    <property type="project" value="Ensembl"/>
</dbReference>
<dbReference type="GO" id="GO:0001228">
    <property type="term" value="F:DNA-binding transcription activator activity, RNA polymerase II-specific"/>
    <property type="evidence" value="ECO:0007669"/>
    <property type="project" value="Ensembl"/>
</dbReference>
<dbReference type="GO" id="GO:0019904">
    <property type="term" value="F:protein domain specific binding"/>
    <property type="evidence" value="ECO:0007669"/>
    <property type="project" value="Ensembl"/>
</dbReference>
<dbReference type="GO" id="GO:0000978">
    <property type="term" value="F:RNA polymerase II cis-regulatory region sequence-specific DNA binding"/>
    <property type="evidence" value="ECO:0007669"/>
    <property type="project" value="Ensembl"/>
</dbReference>
<dbReference type="GO" id="GO:0048646">
    <property type="term" value="P:anatomical structure formation involved in morphogenesis"/>
    <property type="evidence" value="ECO:0007669"/>
    <property type="project" value="Ensembl"/>
</dbReference>
<dbReference type="GO" id="GO:0009952">
    <property type="term" value="P:anterior/posterior pattern specification"/>
    <property type="evidence" value="ECO:0007669"/>
    <property type="project" value="Ensembl"/>
</dbReference>
<dbReference type="GO" id="GO:0048704">
    <property type="term" value="P:embryonic skeletal system morphogenesis"/>
    <property type="evidence" value="ECO:0007669"/>
    <property type="project" value="Ensembl"/>
</dbReference>
<dbReference type="GO" id="GO:0021612">
    <property type="term" value="P:facial nerve structural organization"/>
    <property type="evidence" value="ECO:0007669"/>
    <property type="project" value="Ensembl"/>
</dbReference>
<dbReference type="GO" id="GO:0021754">
    <property type="term" value="P:facial nucleus development"/>
    <property type="evidence" value="ECO:0007669"/>
    <property type="project" value="Ensembl"/>
</dbReference>
<dbReference type="GO" id="GO:0021570">
    <property type="term" value="P:rhombomere 4 development"/>
    <property type="evidence" value="ECO:0007669"/>
    <property type="project" value="Ensembl"/>
</dbReference>
<dbReference type="GO" id="GO:0021571">
    <property type="term" value="P:rhombomere 5 development"/>
    <property type="evidence" value="ECO:0007669"/>
    <property type="project" value="Ensembl"/>
</dbReference>
<dbReference type="CDD" id="cd00086">
    <property type="entry name" value="homeodomain"/>
    <property type="match status" value="1"/>
</dbReference>
<dbReference type="FunFam" id="1.10.10.60:FF:000113">
    <property type="entry name" value="homeobox protein Hox-B1"/>
    <property type="match status" value="1"/>
</dbReference>
<dbReference type="Gene3D" id="1.10.10.60">
    <property type="entry name" value="Homeodomain-like"/>
    <property type="match status" value="1"/>
</dbReference>
<dbReference type="InterPro" id="IPR001356">
    <property type="entry name" value="HD"/>
</dbReference>
<dbReference type="InterPro" id="IPR020479">
    <property type="entry name" value="HD_metazoa"/>
</dbReference>
<dbReference type="InterPro" id="IPR017970">
    <property type="entry name" value="Homeobox_CS"/>
</dbReference>
<dbReference type="InterPro" id="IPR009057">
    <property type="entry name" value="Homeodomain-like_sf"/>
</dbReference>
<dbReference type="InterPro" id="IPR046327">
    <property type="entry name" value="HXA1/B1/D1"/>
</dbReference>
<dbReference type="PANTHER" id="PTHR45946:SF5">
    <property type="entry name" value="HOMEOBOX PROTEIN HOX-B1"/>
    <property type="match status" value="1"/>
</dbReference>
<dbReference type="PANTHER" id="PTHR45946">
    <property type="entry name" value="HOMEOBOX PROTEIN ROUGH-RELATED"/>
    <property type="match status" value="1"/>
</dbReference>
<dbReference type="Pfam" id="PF00046">
    <property type="entry name" value="Homeodomain"/>
    <property type="match status" value="1"/>
</dbReference>
<dbReference type="PRINTS" id="PR00024">
    <property type="entry name" value="HOMEOBOX"/>
</dbReference>
<dbReference type="SMART" id="SM00389">
    <property type="entry name" value="HOX"/>
    <property type="match status" value="1"/>
</dbReference>
<dbReference type="SUPFAM" id="SSF46689">
    <property type="entry name" value="Homeodomain-like"/>
    <property type="match status" value="1"/>
</dbReference>
<dbReference type="PROSITE" id="PS00027">
    <property type="entry name" value="HOMEOBOX_1"/>
    <property type="match status" value="1"/>
</dbReference>
<dbReference type="PROSITE" id="PS50071">
    <property type="entry name" value="HOMEOBOX_2"/>
    <property type="match status" value="1"/>
</dbReference>